<organism>
    <name type="scientific">Mus musculus</name>
    <name type="common">Mouse</name>
    <dbReference type="NCBI Taxonomy" id="10090"/>
    <lineage>
        <taxon>Eukaryota</taxon>
        <taxon>Metazoa</taxon>
        <taxon>Chordata</taxon>
        <taxon>Craniata</taxon>
        <taxon>Vertebrata</taxon>
        <taxon>Euteleostomi</taxon>
        <taxon>Mammalia</taxon>
        <taxon>Eutheria</taxon>
        <taxon>Euarchontoglires</taxon>
        <taxon>Glires</taxon>
        <taxon>Rodentia</taxon>
        <taxon>Myomorpha</taxon>
        <taxon>Muroidea</taxon>
        <taxon>Muridae</taxon>
        <taxon>Murinae</taxon>
        <taxon>Mus</taxon>
        <taxon>Mus</taxon>
    </lineage>
</organism>
<gene>
    <name type="primary">Angptl6</name>
    <name type="synonym">Agf</name>
</gene>
<sequence length="457" mass="51095">MGTARLRKLQLLLLLGAWRALGGAARCRVTLVLSPQKATSAVCRSSEATQDSELATLRMRLGRHEELLRALQRRAAEGGALADEVRALREHSLTLNTRLGQLRAQLQQEARAEPDLGAEPAAALGLLAERALDAEAEARRTTARLQQLDAQLREHAQLMSQHSSLLGRLQRACAGPERGQQQVLPLPLAPLVPLSLVGSASNTSRRLDQTPEHQREQSLRQQGPPSSLLPTGHLAVPTRPVGPWRDCAEAHGAGHWQSGVYDLRLGRRVVAVWCEQQQEGGGWTVIQRRQDGSVNFFTNWQHYKAGFGRPEGEYWLGLEPVHQVTSRGDHELLILLEDWGGRAARAHYDSFSLEPESDHYRLRLGQYHGDAGDSLSWHNDKPFSTVDRDRDSYSGNCALYHRGGWWYHACAHSNLNGVWYHGGHYRSRYQDGVYWAEFRGGAYSLKKAVMLTRLVRL</sequence>
<name>ANGL6_MOUSE</name>
<feature type="signal peptide" evidence="1">
    <location>
        <begin position="1"/>
        <end position="24"/>
    </location>
</feature>
<feature type="chain" id="PRO_0000009129" description="Angiopoietin-related protein 6">
    <location>
        <begin position="25"/>
        <end position="457"/>
    </location>
</feature>
<feature type="domain" description="Fibrinogen C-terminal" evidence="2">
    <location>
        <begin position="238"/>
        <end position="456"/>
    </location>
</feature>
<feature type="region of interest" description="Disordered" evidence="3">
    <location>
        <begin position="201"/>
        <end position="235"/>
    </location>
</feature>
<feature type="coiled-coil region" evidence="1">
    <location>
        <begin position="51"/>
        <end position="77"/>
    </location>
</feature>
<feature type="coiled-coil region" evidence="1">
    <location>
        <begin position="126"/>
        <end position="164"/>
    </location>
</feature>
<feature type="compositionally biased region" description="Basic and acidic residues" evidence="3">
    <location>
        <begin position="205"/>
        <end position="218"/>
    </location>
</feature>
<feature type="compositionally biased region" description="Polar residues" evidence="3">
    <location>
        <begin position="219"/>
        <end position="229"/>
    </location>
</feature>
<feature type="glycosylation site" description="N-linked (GlcNAc...) asparagine" evidence="1">
    <location>
        <position position="202"/>
    </location>
</feature>
<feature type="disulfide bond" evidence="2">
    <location>
        <begin position="247"/>
        <end position="274"/>
    </location>
</feature>
<feature type="disulfide bond" evidence="2">
    <location>
        <begin position="397"/>
        <end position="410"/>
    </location>
</feature>
<accession>Q8R0Z6</accession>
<reference key="1">
    <citation type="journal article" date="2003" name="Proc. Natl. Acad. Sci. U.S.A.">
        <title>Angiopoietin-related growth factor (AGF) promotes epidermal proliferation, remodeling, and regeneration.</title>
        <authorList>
            <person name="Oike Y."/>
            <person name="Yasunaga K."/>
            <person name="Ito Y."/>
            <person name="Matsumoto S."/>
            <person name="Maekawa H."/>
            <person name="Morisada T."/>
            <person name="Arai F."/>
            <person name="Nakagata N."/>
            <person name="Takeya M."/>
            <person name="Masuho Y."/>
            <person name="Suda T."/>
        </authorList>
    </citation>
    <scope>NUCLEOTIDE SEQUENCE [MRNA]</scope>
    <scope>FUNCTION</scope>
    <scope>TISSUE SPECIFICITY</scope>
</reference>
<reference key="2">
    <citation type="journal article" date="2004" name="Genome Res.">
        <title>The status, quality, and expansion of the NIH full-length cDNA project: the Mammalian Gene Collection (MGC).</title>
        <authorList>
            <consortium name="The MGC Project Team"/>
        </authorList>
    </citation>
    <scope>NUCLEOTIDE SEQUENCE [LARGE SCALE MRNA]</scope>
    <source>
        <strain>FVB/N</strain>
        <tissue>Liver</tissue>
    </source>
</reference>
<reference key="3">
    <citation type="journal article" date="2004" name="Blood">
        <title>Angiopoietin-related growth factor (AGF) promotes angiogenesis.</title>
        <authorList>
            <person name="Oike Y."/>
            <person name="Ito Y."/>
            <person name="Maekawa H."/>
            <person name="Morisada T."/>
            <person name="Kubota Y."/>
            <person name="Akao M."/>
            <person name="Urano T."/>
            <person name="Yasunaga K."/>
            <person name="Suda T."/>
        </authorList>
    </citation>
    <scope>FUNCTION</scope>
</reference>
<reference key="4">
    <citation type="journal article" date="2005" name="Nat. Med.">
        <title>Angiopoietin-related growth factor antagonizes obesity and insulin resistance.</title>
        <authorList>
            <person name="Oike Y."/>
            <person name="Akao M."/>
            <person name="Yasunaga K."/>
            <person name="Yamauchi T."/>
            <person name="Morisada T."/>
            <person name="Ito Y."/>
            <person name="Urano T."/>
            <person name="Kimura Y."/>
            <person name="Kubota Y."/>
            <person name="Maekawa H."/>
            <person name="Miyamoto T."/>
            <person name="Miyata K."/>
            <person name="Matsumoto S."/>
            <person name="Sakai J."/>
            <person name="Nakagata N."/>
            <person name="Takeya M."/>
            <person name="Koseki H."/>
            <person name="Ogawa Y."/>
            <person name="Kadowaki T."/>
            <person name="Suda T."/>
        </authorList>
    </citation>
    <scope>FUNCTION</scope>
</reference>
<evidence type="ECO:0000255" key="1"/>
<evidence type="ECO:0000255" key="2">
    <source>
        <dbReference type="PROSITE-ProRule" id="PRU00739"/>
    </source>
</evidence>
<evidence type="ECO:0000256" key="3">
    <source>
        <dbReference type="SAM" id="MobiDB-lite"/>
    </source>
</evidence>
<evidence type="ECO:0000269" key="4">
    <source>
    </source>
</evidence>
<evidence type="ECO:0000269" key="5">
    <source>
    </source>
</evidence>
<evidence type="ECO:0000269" key="6">
    <source>
    </source>
</evidence>
<evidence type="ECO:0000305" key="7"/>
<keyword id="KW-0037">Angiogenesis</keyword>
<keyword id="KW-0175">Coiled coil</keyword>
<keyword id="KW-0217">Developmental protein</keyword>
<keyword id="KW-0221">Differentiation</keyword>
<keyword id="KW-1015">Disulfide bond</keyword>
<keyword id="KW-0325">Glycoprotein</keyword>
<keyword id="KW-1185">Reference proteome</keyword>
<keyword id="KW-0964">Secreted</keyword>
<keyword id="KW-0732">Signal</keyword>
<proteinExistence type="evidence at transcript level"/>
<comment type="function">
    <text evidence="4 5 6">May play a role in the wound healing process. May promote epidermal proliferation, remodeling and regeneration. May promote the chemotactic activity of endothelial cells and induce neovascularization. May counteract high-fat diet-induced obesity and related insulin resistance through increased energy expenditure.</text>
</comment>
<comment type="subcellular location">
    <subcellularLocation>
        <location evidence="7">Secreted</location>
    </subcellularLocation>
</comment>
<comment type="tissue specificity">
    <text evidence="4">Highly expressed in the liver, specifically in hepatocytes, and weakly in the heart. Expressed in hematopoietic cells, platelets and mast cells, and detected at wounded skin.</text>
</comment>
<dbReference type="EMBL" id="AB054065">
    <property type="protein sequence ID" value="BAB91249.1"/>
    <property type="molecule type" value="mRNA"/>
</dbReference>
<dbReference type="EMBL" id="BC025904">
    <property type="protein sequence ID" value="AAH25904.1"/>
    <property type="molecule type" value="mRNA"/>
</dbReference>
<dbReference type="CCDS" id="CCDS22886.1"/>
<dbReference type="RefSeq" id="NP_660136.1">
    <property type="nucleotide sequence ID" value="NM_145154.2"/>
</dbReference>
<dbReference type="SMR" id="Q8R0Z6"/>
<dbReference type="BioGRID" id="214222">
    <property type="interactions" value="1"/>
</dbReference>
<dbReference type="FunCoup" id="Q8R0Z6">
    <property type="interactions" value="18"/>
</dbReference>
<dbReference type="STRING" id="10090.ENSMUSP00000035784"/>
<dbReference type="GlyCosmos" id="Q8R0Z6">
    <property type="glycosylation" value="1 site, No reported glycans"/>
</dbReference>
<dbReference type="GlyGen" id="Q8R0Z6">
    <property type="glycosylation" value="1 site"/>
</dbReference>
<dbReference type="iPTMnet" id="Q8R0Z6"/>
<dbReference type="PhosphoSitePlus" id="Q8R0Z6"/>
<dbReference type="PaxDb" id="10090-ENSMUSP00000035784"/>
<dbReference type="PeptideAtlas" id="Q8R0Z6"/>
<dbReference type="ProteomicsDB" id="296357"/>
<dbReference type="Antibodypedia" id="25178">
    <property type="antibodies" value="176 antibodies from 27 providers"/>
</dbReference>
<dbReference type="Ensembl" id="ENSMUST00000043726.8">
    <property type="protein sequence ID" value="ENSMUSP00000035784.7"/>
    <property type="gene ID" value="ENSMUSG00000038742.8"/>
</dbReference>
<dbReference type="GeneID" id="70726"/>
<dbReference type="KEGG" id="mmu:70726"/>
<dbReference type="UCSC" id="uc009ojj.1">
    <property type="organism name" value="mouse"/>
</dbReference>
<dbReference type="AGR" id="MGI:1917976"/>
<dbReference type="CTD" id="83854"/>
<dbReference type="MGI" id="MGI:1917976">
    <property type="gene designation" value="Angptl6"/>
</dbReference>
<dbReference type="VEuPathDB" id="HostDB:ENSMUSG00000038742"/>
<dbReference type="eggNOG" id="KOG2579">
    <property type="taxonomic scope" value="Eukaryota"/>
</dbReference>
<dbReference type="GeneTree" id="ENSGT00940000160969"/>
<dbReference type="HOGENOM" id="CLU_038628_0_1_1"/>
<dbReference type="InParanoid" id="Q8R0Z6"/>
<dbReference type="OMA" id="PVWCEQQ"/>
<dbReference type="OrthoDB" id="7735550at2759"/>
<dbReference type="PhylomeDB" id="Q8R0Z6"/>
<dbReference type="TreeFam" id="TF336658"/>
<dbReference type="BioGRID-ORCS" id="70726">
    <property type="hits" value="2 hits in 76 CRISPR screens"/>
</dbReference>
<dbReference type="PRO" id="PR:Q8R0Z6"/>
<dbReference type="Proteomes" id="UP000000589">
    <property type="component" value="Chromosome 9"/>
</dbReference>
<dbReference type="RNAct" id="Q8R0Z6">
    <property type="molecule type" value="protein"/>
</dbReference>
<dbReference type="Bgee" id="ENSMUSG00000038742">
    <property type="expression patterns" value="Expressed in yolk sac and 119 other cell types or tissues"/>
</dbReference>
<dbReference type="GO" id="GO:0005576">
    <property type="term" value="C:extracellular region"/>
    <property type="evidence" value="ECO:0007669"/>
    <property type="project" value="UniProtKB-SubCell"/>
</dbReference>
<dbReference type="GO" id="GO:0030141">
    <property type="term" value="C:secretory granule"/>
    <property type="evidence" value="ECO:0000314"/>
    <property type="project" value="MGI"/>
</dbReference>
<dbReference type="GO" id="GO:0001525">
    <property type="term" value="P:angiogenesis"/>
    <property type="evidence" value="ECO:0007669"/>
    <property type="project" value="UniProtKB-KW"/>
</dbReference>
<dbReference type="GO" id="GO:0007596">
    <property type="term" value="P:blood coagulation"/>
    <property type="evidence" value="ECO:0007669"/>
    <property type="project" value="InterPro"/>
</dbReference>
<dbReference type="GO" id="GO:0030154">
    <property type="term" value="P:cell differentiation"/>
    <property type="evidence" value="ECO:0007669"/>
    <property type="project" value="UniProtKB-KW"/>
</dbReference>
<dbReference type="CDD" id="cd00087">
    <property type="entry name" value="FReD"/>
    <property type="match status" value="1"/>
</dbReference>
<dbReference type="FunFam" id="3.90.215.10:FF:000001">
    <property type="entry name" value="Tenascin isoform 1"/>
    <property type="match status" value="1"/>
</dbReference>
<dbReference type="Gene3D" id="3.90.215.10">
    <property type="entry name" value="Gamma Fibrinogen, chain A, domain 1"/>
    <property type="match status" value="1"/>
</dbReference>
<dbReference type="InterPro" id="IPR037579">
    <property type="entry name" value="FIB_ANG-like"/>
</dbReference>
<dbReference type="InterPro" id="IPR036056">
    <property type="entry name" value="Fibrinogen-like_C"/>
</dbReference>
<dbReference type="InterPro" id="IPR014716">
    <property type="entry name" value="Fibrinogen_a/b/g_C_1"/>
</dbReference>
<dbReference type="InterPro" id="IPR002181">
    <property type="entry name" value="Fibrinogen_a/b/g_C_dom"/>
</dbReference>
<dbReference type="InterPro" id="IPR020837">
    <property type="entry name" value="Fibrinogen_CS"/>
</dbReference>
<dbReference type="PANTHER" id="PTHR47221">
    <property type="entry name" value="FIBRINOGEN ALPHA CHAIN"/>
    <property type="match status" value="1"/>
</dbReference>
<dbReference type="PANTHER" id="PTHR47221:SF6">
    <property type="entry name" value="FIBRINOGEN ALPHA CHAIN"/>
    <property type="match status" value="1"/>
</dbReference>
<dbReference type="Pfam" id="PF00147">
    <property type="entry name" value="Fibrinogen_C"/>
    <property type="match status" value="1"/>
</dbReference>
<dbReference type="SMART" id="SM00186">
    <property type="entry name" value="FBG"/>
    <property type="match status" value="1"/>
</dbReference>
<dbReference type="SUPFAM" id="SSF56496">
    <property type="entry name" value="Fibrinogen C-terminal domain-like"/>
    <property type="match status" value="1"/>
</dbReference>
<dbReference type="PROSITE" id="PS00514">
    <property type="entry name" value="FIBRINOGEN_C_1"/>
    <property type="match status" value="1"/>
</dbReference>
<dbReference type="PROSITE" id="PS51406">
    <property type="entry name" value="FIBRINOGEN_C_2"/>
    <property type="match status" value="1"/>
</dbReference>
<protein>
    <recommendedName>
        <fullName>Angiopoietin-related protein 6</fullName>
    </recommendedName>
    <alternativeName>
        <fullName>Angiopoietin-like protein 6</fullName>
    </alternativeName>
    <alternativeName>
        <fullName>Angiopoietin-related growth factor</fullName>
    </alternativeName>
</protein>